<protein>
    <recommendedName>
        <fullName>Nicotinamide-nucleotide adenylyltransferase</fullName>
        <ecNumber>2.7.7.1</ecNumber>
    </recommendedName>
    <alternativeName>
        <fullName>NAD(+) diphosphorylase</fullName>
    </alternativeName>
    <alternativeName>
        <fullName>NAD(+) pyrophosphorylase</fullName>
    </alternativeName>
    <alternativeName>
        <fullName>NMN adenylyltransferase</fullName>
    </alternativeName>
</protein>
<proteinExistence type="inferred from homology"/>
<keyword id="KW-0067">ATP-binding</keyword>
<keyword id="KW-0963">Cytoplasm</keyword>
<keyword id="KW-0520">NAD</keyword>
<keyword id="KW-0547">Nucleotide-binding</keyword>
<keyword id="KW-0548">Nucleotidyltransferase</keyword>
<keyword id="KW-0662">Pyridine nucleotide biosynthesis</keyword>
<keyword id="KW-0808">Transferase</keyword>
<feature type="chain" id="PRO_0000134998" description="Nicotinamide-nucleotide adenylyltransferase">
    <location>
        <begin position="1"/>
        <end position="186"/>
    </location>
</feature>
<evidence type="ECO:0000250" key="1"/>
<evidence type="ECO:0000305" key="2"/>
<sequence length="186" mass="21417">MIRGLFVGRFQPVHKGHIKALEFVFSQVDEVIIGIGSAQASHTLKNPFTTGERMEMLIRAIEEAGFKKRYYLVPLPDINFNAIWVPYVESMVPKFHVVFTGNSLVAQLFRERGYKVVVQPMFRKDILSATEIRRRMIAGEPWEDLVPKSVVEYIKEIKGVERLRNLATNLESSEKELQAPIRIPEF</sequence>
<accession>Q9UYD4</accession>
<accession>G8ZIZ8</accession>
<comment type="catalytic activity">
    <reaction>
        <text>beta-nicotinamide D-ribonucleotide + ATP + H(+) = diphosphate + NAD(+)</text>
        <dbReference type="Rhea" id="RHEA:21360"/>
        <dbReference type="ChEBI" id="CHEBI:14649"/>
        <dbReference type="ChEBI" id="CHEBI:15378"/>
        <dbReference type="ChEBI" id="CHEBI:30616"/>
        <dbReference type="ChEBI" id="CHEBI:33019"/>
        <dbReference type="ChEBI" id="CHEBI:57540"/>
        <dbReference type="EC" id="2.7.7.1"/>
    </reaction>
</comment>
<comment type="pathway">
    <text>Cofactor biosynthesis; NAD(+) biosynthesis; NAD(+) from nicotinamide D-ribonucleotide: step 1/1.</text>
</comment>
<comment type="subcellular location">
    <subcellularLocation>
        <location evidence="1">Cytoplasm</location>
    </subcellularLocation>
</comment>
<comment type="similarity">
    <text evidence="2">Belongs to the archaeal NMN adenylyltransferase family.</text>
</comment>
<name>NADM_PYRAB</name>
<organism>
    <name type="scientific">Pyrococcus abyssi (strain GE5 / Orsay)</name>
    <dbReference type="NCBI Taxonomy" id="272844"/>
    <lineage>
        <taxon>Archaea</taxon>
        <taxon>Methanobacteriati</taxon>
        <taxon>Methanobacteriota</taxon>
        <taxon>Thermococci</taxon>
        <taxon>Thermococcales</taxon>
        <taxon>Thermococcaceae</taxon>
        <taxon>Pyrococcus</taxon>
    </lineage>
</organism>
<dbReference type="EC" id="2.7.7.1"/>
<dbReference type="EMBL" id="AJ248288">
    <property type="protein sequence ID" value="CAB50478.1"/>
    <property type="molecule type" value="Genomic_DNA"/>
</dbReference>
<dbReference type="EMBL" id="HE613800">
    <property type="protein sequence ID" value="CCE71031.1"/>
    <property type="molecule type" value="Genomic_DNA"/>
</dbReference>
<dbReference type="PIR" id="H75004">
    <property type="entry name" value="H75004"/>
</dbReference>
<dbReference type="RefSeq" id="WP_010868691.1">
    <property type="nucleotide sequence ID" value="NC_000868.1"/>
</dbReference>
<dbReference type="SMR" id="Q9UYD4"/>
<dbReference type="STRING" id="272844.PAB1318"/>
<dbReference type="KEGG" id="pab:PAB1318"/>
<dbReference type="PATRIC" id="fig|272844.11.peg.1678"/>
<dbReference type="eggNOG" id="arCOG00972">
    <property type="taxonomic scope" value="Archaea"/>
</dbReference>
<dbReference type="HOGENOM" id="CLU_108783_0_0_2"/>
<dbReference type="OrthoDB" id="264480at2157"/>
<dbReference type="PhylomeDB" id="Q9UYD4"/>
<dbReference type="UniPathway" id="UPA00253">
    <property type="reaction ID" value="UER00600"/>
</dbReference>
<dbReference type="Proteomes" id="UP000000810">
    <property type="component" value="Chromosome"/>
</dbReference>
<dbReference type="Proteomes" id="UP000009139">
    <property type="component" value="Chromosome"/>
</dbReference>
<dbReference type="GO" id="GO:0005737">
    <property type="term" value="C:cytoplasm"/>
    <property type="evidence" value="ECO:0007669"/>
    <property type="project" value="UniProtKB-SubCell"/>
</dbReference>
<dbReference type="GO" id="GO:0005524">
    <property type="term" value="F:ATP binding"/>
    <property type="evidence" value="ECO:0007669"/>
    <property type="project" value="UniProtKB-KW"/>
</dbReference>
<dbReference type="GO" id="GO:0000309">
    <property type="term" value="F:nicotinamide-nucleotide adenylyltransferase activity"/>
    <property type="evidence" value="ECO:0007669"/>
    <property type="project" value="UniProtKB-UniRule"/>
</dbReference>
<dbReference type="GO" id="GO:0009435">
    <property type="term" value="P:NAD biosynthetic process"/>
    <property type="evidence" value="ECO:0007669"/>
    <property type="project" value="UniProtKB-UniRule"/>
</dbReference>
<dbReference type="CDD" id="cd02166">
    <property type="entry name" value="NMNAT_Archaea"/>
    <property type="match status" value="1"/>
</dbReference>
<dbReference type="Gene3D" id="3.40.50.620">
    <property type="entry name" value="HUPs"/>
    <property type="match status" value="1"/>
</dbReference>
<dbReference type="HAMAP" id="MF_00243">
    <property type="entry name" value="NMN_adenylyltr"/>
    <property type="match status" value="1"/>
</dbReference>
<dbReference type="InterPro" id="IPR004821">
    <property type="entry name" value="Cyt_trans-like"/>
</dbReference>
<dbReference type="InterPro" id="IPR006418">
    <property type="entry name" value="NMN_Atrans_arc"/>
</dbReference>
<dbReference type="InterPro" id="IPR014729">
    <property type="entry name" value="Rossmann-like_a/b/a_fold"/>
</dbReference>
<dbReference type="NCBIfam" id="TIGR01527">
    <property type="entry name" value="arch_NMN_Atrans"/>
    <property type="match status" value="1"/>
</dbReference>
<dbReference type="NCBIfam" id="TIGR00125">
    <property type="entry name" value="cyt_tran_rel"/>
    <property type="match status" value="1"/>
</dbReference>
<dbReference type="NCBIfam" id="NF002243">
    <property type="entry name" value="PRK01153.1"/>
    <property type="match status" value="1"/>
</dbReference>
<dbReference type="PANTHER" id="PTHR21342:SF0">
    <property type="entry name" value="BIFUNCTIONAL NMN ADENYLYLTRANSFERASE_NUDIX HYDROLASE"/>
    <property type="match status" value="1"/>
</dbReference>
<dbReference type="PANTHER" id="PTHR21342">
    <property type="entry name" value="PHOSPHOPANTETHEINE ADENYLYLTRANSFERASE"/>
    <property type="match status" value="1"/>
</dbReference>
<dbReference type="Pfam" id="PF01467">
    <property type="entry name" value="CTP_transf_like"/>
    <property type="match status" value="1"/>
</dbReference>
<dbReference type="SUPFAM" id="SSF52374">
    <property type="entry name" value="Nucleotidylyl transferase"/>
    <property type="match status" value="1"/>
</dbReference>
<reference key="1">
    <citation type="journal article" date="2003" name="Mol. Microbiol.">
        <title>An integrated analysis of the genome of the hyperthermophilic archaeon Pyrococcus abyssi.</title>
        <authorList>
            <person name="Cohen G.N."/>
            <person name="Barbe V."/>
            <person name="Flament D."/>
            <person name="Galperin M."/>
            <person name="Heilig R."/>
            <person name="Lecompte O."/>
            <person name="Poch O."/>
            <person name="Prieur D."/>
            <person name="Querellou J."/>
            <person name="Ripp R."/>
            <person name="Thierry J.-C."/>
            <person name="Van der Oost J."/>
            <person name="Weissenbach J."/>
            <person name="Zivanovic Y."/>
            <person name="Forterre P."/>
        </authorList>
    </citation>
    <scope>NUCLEOTIDE SEQUENCE [LARGE SCALE GENOMIC DNA]</scope>
    <source>
        <strain>GE5 / Orsay</strain>
    </source>
</reference>
<reference key="2">
    <citation type="journal article" date="2012" name="Curr. Microbiol.">
        <title>Re-annotation of two hyperthermophilic archaea Pyrococcus abyssi GE5 and Pyrococcus furiosus DSM 3638.</title>
        <authorList>
            <person name="Gao J."/>
            <person name="Wang J."/>
        </authorList>
    </citation>
    <scope>GENOME REANNOTATION</scope>
    <source>
        <strain>GE5 / Orsay</strain>
    </source>
</reference>
<gene>
    <name type="ordered locus">PYRAB15740</name>
    <name type="ORF">PAB1318</name>
</gene>